<keyword id="KW-0028">Amino-acid biosynthesis</keyword>
<keyword id="KW-0055">Arginine biosynthesis</keyword>
<keyword id="KW-0963">Cytoplasm</keyword>
<keyword id="KW-0456">Lyase</keyword>
<comment type="catalytic activity">
    <reaction evidence="1">
        <text>2-(N(omega)-L-arginino)succinate = fumarate + L-arginine</text>
        <dbReference type="Rhea" id="RHEA:24020"/>
        <dbReference type="ChEBI" id="CHEBI:29806"/>
        <dbReference type="ChEBI" id="CHEBI:32682"/>
        <dbReference type="ChEBI" id="CHEBI:57472"/>
        <dbReference type="EC" id="4.3.2.1"/>
    </reaction>
</comment>
<comment type="pathway">
    <text evidence="1">Amino-acid biosynthesis; L-arginine biosynthesis; L-arginine from L-ornithine and carbamoyl phosphate: step 3/3.</text>
</comment>
<comment type="subcellular location">
    <subcellularLocation>
        <location evidence="1">Cytoplasm</location>
    </subcellularLocation>
</comment>
<comment type="similarity">
    <text evidence="1">Belongs to the lyase 1 family. Argininosuccinate lyase subfamily.</text>
</comment>
<accession>B7I338</accession>
<reference key="1">
    <citation type="journal article" date="2008" name="J. Bacteriol.">
        <title>Comparative genome sequence analysis of multidrug-resistant Acinetobacter baumannii.</title>
        <authorList>
            <person name="Adams M.D."/>
            <person name="Goglin K."/>
            <person name="Molyneaux N."/>
            <person name="Hujer K.M."/>
            <person name="Lavender H."/>
            <person name="Jamison J.J."/>
            <person name="MacDonald I.J."/>
            <person name="Martin K.M."/>
            <person name="Russo T."/>
            <person name="Campagnari A.A."/>
            <person name="Hujer A.M."/>
            <person name="Bonomo R.A."/>
            <person name="Gill S.R."/>
        </authorList>
    </citation>
    <scope>NUCLEOTIDE SEQUENCE [LARGE SCALE GENOMIC DNA]</scope>
    <source>
        <strain>AB0057</strain>
    </source>
</reference>
<feature type="chain" id="PRO_1000116297" description="Argininosuccinate lyase">
    <location>
        <begin position="1"/>
        <end position="477"/>
    </location>
</feature>
<name>ARLY_ACIB5</name>
<proteinExistence type="inferred from homology"/>
<evidence type="ECO:0000255" key="1">
    <source>
        <dbReference type="HAMAP-Rule" id="MF_00006"/>
    </source>
</evidence>
<protein>
    <recommendedName>
        <fullName evidence="1">Argininosuccinate lyase</fullName>
        <shortName evidence="1">ASAL</shortName>
        <ecNumber evidence="1">4.3.2.1</ecNumber>
    </recommendedName>
    <alternativeName>
        <fullName evidence="1">Arginosuccinase</fullName>
    </alternativeName>
</protein>
<sequence>MTTSSNPPNSAAPNQTSGMWGGRFSEATDAFVAEFTASVQFDQRFYKQDIAGSIAHATMLAKVGVLTEAERDDIIEGLSTIRAEIEAGTFEWRIDLEDVHMNIESRLTQRIGITGKKLHTGRSRNDQVATDIRLYLRDEIDDILGLLERLQKGLLGLAAKNVNTIMPGFTHLQTAQPVTFGHHLLAWFEMLVRDTERLQDCRKRVNRMPLGSAALAGTTYPIDRAYTAELLGFEAVSENSLDAVSDRDFAIEFNAAASLIMMHLSRMSEELILWTSAQFKFVNIPDRFCTGSSIMPQKKNPDVPELIRGKSGRVFGDLVSLLTLMKGQPLAYNKDNQEDKEPLFDAIDTVRGSLMAFADMIPALVPNVEIMREAALRGFSTATDLADYLVKKGVAFRDAHEIVGKAVALGVAEEKDLSELTLEQLQQFSDLITADVFDKALTLEASVNARDHIGGTSPKQVEAAIARAHKRLEQLYA</sequence>
<organism>
    <name type="scientific">Acinetobacter baumannii (strain AB0057)</name>
    <dbReference type="NCBI Taxonomy" id="480119"/>
    <lineage>
        <taxon>Bacteria</taxon>
        <taxon>Pseudomonadati</taxon>
        <taxon>Pseudomonadota</taxon>
        <taxon>Gammaproteobacteria</taxon>
        <taxon>Moraxellales</taxon>
        <taxon>Moraxellaceae</taxon>
        <taxon>Acinetobacter</taxon>
        <taxon>Acinetobacter calcoaceticus/baumannii complex</taxon>
    </lineage>
</organism>
<gene>
    <name evidence="1" type="primary">argH</name>
    <name type="ordered locus">AB57_0347</name>
</gene>
<dbReference type="EC" id="4.3.2.1" evidence="1"/>
<dbReference type="EMBL" id="CP001182">
    <property type="protein sequence ID" value="ACJ39773.1"/>
    <property type="molecule type" value="Genomic_DNA"/>
</dbReference>
<dbReference type="RefSeq" id="WP_000213742.1">
    <property type="nucleotide sequence ID" value="NC_011586.2"/>
</dbReference>
<dbReference type="SMR" id="B7I338"/>
<dbReference type="KEGG" id="abn:AB57_0347"/>
<dbReference type="HOGENOM" id="CLU_027272_2_3_6"/>
<dbReference type="UniPathway" id="UPA00068">
    <property type="reaction ID" value="UER00114"/>
</dbReference>
<dbReference type="Proteomes" id="UP000007094">
    <property type="component" value="Chromosome"/>
</dbReference>
<dbReference type="GO" id="GO:0005829">
    <property type="term" value="C:cytosol"/>
    <property type="evidence" value="ECO:0007669"/>
    <property type="project" value="TreeGrafter"/>
</dbReference>
<dbReference type="GO" id="GO:0004056">
    <property type="term" value="F:argininosuccinate lyase activity"/>
    <property type="evidence" value="ECO:0007669"/>
    <property type="project" value="UniProtKB-UniRule"/>
</dbReference>
<dbReference type="GO" id="GO:0042450">
    <property type="term" value="P:arginine biosynthetic process via ornithine"/>
    <property type="evidence" value="ECO:0007669"/>
    <property type="project" value="InterPro"/>
</dbReference>
<dbReference type="GO" id="GO:0006526">
    <property type="term" value="P:L-arginine biosynthetic process"/>
    <property type="evidence" value="ECO:0007669"/>
    <property type="project" value="UniProtKB-UniRule"/>
</dbReference>
<dbReference type="CDD" id="cd01359">
    <property type="entry name" value="Argininosuccinate_lyase"/>
    <property type="match status" value="1"/>
</dbReference>
<dbReference type="FunFam" id="1.10.275.10:FF:000002">
    <property type="entry name" value="Argininosuccinate lyase"/>
    <property type="match status" value="1"/>
</dbReference>
<dbReference type="FunFam" id="1.10.40.30:FF:000001">
    <property type="entry name" value="Argininosuccinate lyase"/>
    <property type="match status" value="1"/>
</dbReference>
<dbReference type="FunFam" id="1.20.200.10:FF:000015">
    <property type="entry name" value="argininosuccinate lyase isoform X2"/>
    <property type="match status" value="1"/>
</dbReference>
<dbReference type="Gene3D" id="1.10.40.30">
    <property type="entry name" value="Fumarase/aspartase (C-terminal domain)"/>
    <property type="match status" value="1"/>
</dbReference>
<dbReference type="Gene3D" id="1.20.200.10">
    <property type="entry name" value="Fumarase/aspartase (Central domain)"/>
    <property type="match status" value="1"/>
</dbReference>
<dbReference type="Gene3D" id="1.10.275.10">
    <property type="entry name" value="Fumarase/aspartase (N-terminal domain)"/>
    <property type="match status" value="1"/>
</dbReference>
<dbReference type="HAMAP" id="MF_00006">
    <property type="entry name" value="Arg_succ_lyase"/>
    <property type="match status" value="1"/>
</dbReference>
<dbReference type="InterPro" id="IPR029419">
    <property type="entry name" value="Arg_succ_lyase_C"/>
</dbReference>
<dbReference type="InterPro" id="IPR009049">
    <property type="entry name" value="Argininosuccinate_lyase"/>
</dbReference>
<dbReference type="InterPro" id="IPR024083">
    <property type="entry name" value="Fumarase/histidase_N"/>
</dbReference>
<dbReference type="InterPro" id="IPR020557">
    <property type="entry name" value="Fumarate_lyase_CS"/>
</dbReference>
<dbReference type="InterPro" id="IPR000362">
    <property type="entry name" value="Fumarate_lyase_fam"/>
</dbReference>
<dbReference type="InterPro" id="IPR022761">
    <property type="entry name" value="Fumarate_lyase_N"/>
</dbReference>
<dbReference type="InterPro" id="IPR008948">
    <property type="entry name" value="L-Aspartase-like"/>
</dbReference>
<dbReference type="NCBIfam" id="TIGR00838">
    <property type="entry name" value="argH"/>
    <property type="match status" value="1"/>
</dbReference>
<dbReference type="PANTHER" id="PTHR43814">
    <property type="entry name" value="ARGININOSUCCINATE LYASE"/>
    <property type="match status" value="1"/>
</dbReference>
<dbReference type="PANTHER" id="PTHR43814:SF1">
    <property type="entry name" value="ARGININOSUCCINATE LYASE"/>
    <property type="match status" value="1"/>
</dbReference>
<dbReference type="Pfam" id="PF14698">
    <property type="entry name" value="ASL_C2"/>
    <property type="match status" value="1"/>
</dbReference>
<dbReference type="Pfam" id="PF00206">
    <property type="entry name" value="Lyase_1"/>
    <property type="match status" value="1"/>
</dbReference>
<dbReference type="PRINTS" id="PR00145">
    <property type="entry name" value="ARGSUCLYASE"/>
</dbReference>
<dbReference type="PRINTS" id="PR00149">
    <property type="entry name" value="FUMRATELYASE"/>
</dbReference>
<dbReference type="SUPFAM" id="SSF48557">
    <property type="entry name" value="L-aspartase-like"/>
    <property type="match status" value="1"/>
</dbReference>
<dbReference type="PROSITE" id="PS00163">
    <property type="entry name" value="FUMARATE_LYASES"/>
    <property type="match status" value="1"/>
</dbReference>